<feature type="chain" id="PRO_0000318752" description="Cytoplasmic dynein 2 light intermediate chain 1">
    <location>
        <begin position="1"/>
        <end position="351"/>
    </location>
</feature>
<feature type="region of interest" description="Disordered" evidence="3">
    <location>
        <begin position="304"/>
        <end position="335"/>
    </location>
</feature>
<feature type="compositionally biased region" description="Basic and acidic residues" evidence="3">
    <location>
        <begin position="323"/>
        <end position="335"/>
    </location>
</feature>
<feature type="splice variant" id="VSP_031293" description="In isoform 2." evidence="6">
    <original>S</original>
    <variation>RYWYIFSNQFPRSRVSCLPPPLSSACDFPLLIFSTCLFWLCPARGLSWLWCCLSQPVLLAHLGHCFYP</variation>
    <location>
        <position position="244"/>
    </location>
</feature>
<feature type="splice variant" id="VSP_031294" description="In isoform 2." evidence="6">
    <location>
        <begin position="245"/>
        <end position="351"/>
    </location>
</feature>
<protein>
    <recommendedName>
        <fullName>Cytoplasmic dynein 2 light intermediate chain 1</fullName>
    </recommendedName>
</protein>
<proteinExistence type="evidence at protein level"/>
<accession>Q6AY43</accession>
<organism>
    <name type="scientific">Rattus norvegicus</name>
    <name type="common">Rat</name>
    <dbReference type="NCBI Taxonomy" id="10116"/>
    <lineage>
        <taxon>Eukaryota</taxon>
        <taxon>Metazoa</taxon>
        <taxon>Chordata</taxon>
        <taxon>Craniata</taxon>
        <taxon>Vertebrata</taxon>
        <taxon>Euteleostomi</taxon>
        <taxon>Mammalia</taxon>
        <taxon>Eutheria</taxon>
        <taxon>Euarchontoglires</taxon>
        <taxon>Glires</taxon>
        <taxon>Rodentia</taxon>
        <taxon>Myomorpha</taxon>
        <taxon>Muroidea</taxon>
        <taxon>Muridae</taxon>
        <taxon>Murinae</taxon>
        <taxon>Rattus</taxon>
    </lineage>
</organism>
<dbReference type="EMBL" id="AABR03048845">
    <property type="status" value="NOT_ANNOTATED_CDS"/>
    <property type="molecule type" value="Genomic_DNA"/>
</dbReference>
<dbReference type="EMBL" id="BC079201">
    <property type="protein sequence ID" value="AAH79201.1"/>
    <property type="molecule type" value="mRNA"/>
</dbReference>
<dbReference type="RefSeq" id="NP_001013962.1">
    <property type="nucleotide sequence ID" value="NM_001013940.1"/>
</dbReference>
<dbReference type="RefSeq" id="NP_001382012.1">
    <molecule id="Q6AY43-1"/>
    <property type="nucleotide sequence ID" value="NM_001395083.1"/>
</dbReference>
<dbReference type="RefSeq" id="XP_006239757.1">
    <property type="nucleotide sequence ID" value="XM_006239695.3"/>
</dbReference>
<dbReference type="SMR" id="Q6AY43"/>
<dbReference type="FunCoup" id="Q6AY43">
    <property type="interactions" value="797"/>
</dbReference>
<dbReference type="STRING" id="10116.ENSRNOP00000006953"/>
<dbReference type="PhosphoSitePlus" id="Q6AY43"/>
<dbReference type="PaxDb" id="10116-ENSRNOP00000006953"/>
<dbReference type="Ensembl" id="ENSRNOT00000006953.7">
    <molecule id="Q6AY43-1"/>
    <property type="protein sequence ID" value="ENSRNOP00000006953.4"/>
    <property type="gene ID" value="ENSRNOG00000005151.8"/>
</dbReference>
<dbReference type="Ensembl" id="ENSRNOT00000068030.3">
    <molecule id="Q6AY43-2"/>
    <property type="protein sequence ID" value="ENSRNOP00000063540.1"/>
    <property type="gene ID" value="ENSRNOG00000005151.8"/>
</dbReference>
<dbReference type="GeneID" id="298767"/>
<dbReference type="UCSC" id="RGD:1310286">
    <molecule id="Q6AY43-1"/>
    <property type="organism name" value="rat"/>
</dbReference>
<dbReference type="AGR" id="RGD:1310286"/>
<dbReference type="RGD" id="1310286">
    <property type="gene designation" value="Dync2li1"/>
</dbReference>
<dbReference type="eggNOG" id="KOG3929">
    <property type="taxonomic scope" value="Eukaryota"/>
</dbReference>
<dbReference type="GeneTree" id="ENSGT00390000010498"/>
<dbReference type="HOGENOM" id="CLU_049395_0_0_1"/>
<dbReference type="InParanoid" id="Q6AY43"/>
<dbReference type="PhylomeDB" id="Q6AY43"/>
<dbReference type="TreeFam" id="TF314138"/>
<dbReference type="Reactome" id="R-RNO-5620924">
    <property type="pathway name" value="Intraflagellar transport"/>
</dbReference>
<dbReference type="PRO" id="PR:Q6AY43"/>
<dbReference type="Proteomes" id="UP000002494">
    <property type="component" value="Chromosome 6"/>
</dbReference>
<dbReference type="Bgee" id="ENSRNOG00000005151">
    <property type="expression patterns" value="Expressed in testis and 20 other cell types or tissues"/>
</dbReference>
<dbReference type="GO" id="GO:0045177">
    <property type="term" value="C:apical part of cell"/>
    <property type="evidence" value="ECO:0000266"/>
    <property type="project" value="RGD"/>
</dbReference>
<dbReference type="GO" id="GO:0005930">
    <property type="term" value="C:axoneme"/>
    <property type="evidence" value="ECO:0000266"/>
    <property type="project" value="RGD"/>
</dbReference>
<dbReference type="GO" id="GO:0005813">
    <property type="term" value="C:centrosome"/>
    <property type="evidence" value="ECO:0000250"/>
    <property type="project" value="UniProtKB"/>
</dbReference>
<dbReference type="GO" id="GO:0036064">
    <property type="term" value="C:ciliary basal body"/>
    <property type="evidence" value="ECO:0000250"/>
    <property type="project" value="UniProtKB"/>
</dbReference>
<dbReference type="GO" id="GO:0035869">
    <property type="term" value="C:ciliary transition zone"/>
    <property type="evidence" value="ECO:0000250"/>
    <property type="project" value="UniProtKB"/>
</dbReference>
<dbReference type="GO" id="GO:0005737">
    <property type="term" value="C:cytoplasm"/>
    <property type="evidence" value="ECO:0000250"/>
    <property type="project" value="UniProtKB"/>
</dbReference>
<dbReference type="GO" id="GO:0005868">
    <property type="term" value="C:cytoplasmic dynein complex"/>
    <property type="evidence" value="ECO:0000250"/>
    <property type="project" value="UniProtKB"/>
</dbReference>
<dbReference type="GO" id="GO:0005874">
    <property type="term" value="C:microtubule"/>
    <property type="evidence" value="ECO:0007669"/>
    <property type="project" value="UniProtKB-KW"/>
</dbReference>
<dbReference type="GO" id="GO:0031514">
    <property type="term" value="C:motile cilium"/>
    <property type="evidence" value="ECO:0000266"/>
    <property type="project" value="RGD"/>
</dbReference>
<dbReference type="GO" id="GO:0045504">
    <property type="term" value="F:dynein heavy chain binding"/>
    <property type="evidence" value="ECO:0000353"/>
    <property type="project" value="WormBase"/>
</dbReference>
<dbReference type="GO" id="GO:0060271">
    <property type="term" value="P:cilium assembly"/>
    <property type="evidence" value="ECO:0000266"/>
    <property type="project" value="RGD"/>
</dbReference>
<dbReference type="GO" id="GO:0007368">
    <property type="term" value="P:determination of left/right symmetry"/>
    <property type="evidence" value="ECO:0000266"/>
    <property type="project" value="RGD"/>
</dbReference>
<dbReference type="GO" id="GO:0035721">
    <property type="term" value="P:intraciliary retrograde transport"/>
    <property type="evidence" value="ECO:0000318"/>
    <property type="project" value="GO_Central"/>
</dbReference>
<dbReference type="GO" id="GO:0035735">
    <property type="term" value="P:intraciliary transport involved in cilium assembly"/>
    <property type="evidence" value="ECO:0000250"/>
    <property type="project" value="UniProtKB"/>
</dbReference>
<dbReference type="GO" id="GO:1902017">
    <property type="term" value="P:regulation of cilium assembly"/>
    <property type="evidence" value="ECO:0000250"/>
    <property type="project" value="UniProtKB"/>
</dbReference>
<dbReference type="InterPro" id="IPR040045">
    <property type="entry name" value="DYNC2LI1"/>
</dbReference>
<dbReference type="InterPro" id="IPR022780">
    <property type="entry name" value="Dynein_light_int_chain"/>
</dbReference>
<dbReference type="InterPro" id="IPR027417">
    <property type="entry name" value="P-loop_NTPase"/>
</dbReference>
<dbReference type="PANTHER" id="PTHR13236:SF0">
    <property type="entry name" value="CYTOPLASMIC DYNEIN 2 LIGHT INTERMEDIATE CHAIN 1"/>
    <property type="match status" value="1"/>
</dbReference>
<dbReference type="PANTHER" id="PTHR13236">
    <property type="entry name" value="DYNEIN 2 LIGHT INTERMEDIATE CHAIN, ISOFORM 2"/>
    <property type="match status" value="1"/>
</dbReference>
<dbReference type="Pfam" id="PF05783">
    <property type="entry name" value="DLIC"/>
    <property type="match status" value="1"/>
</dbReference>
<dbReference type="SUPFAM" id="SSF52540">
    <property type="entry name" value="P-loop containing nucleoside triphosphate hydrolases"/>
    <property type="match status" value="1"/>
</dbReference>
<comment type="function">
    <text evidence="2">Acts as one of several non-catalytic accessory components of the cytoplasmic dynein 2 complex (dynein-2 complex), a motor protein complex that drives the movement of cargos along microtubules within cilia and flagella in concert with the intraflagellar transport (IFT) system, facilitating the assembly of these organelles. Involved in the regulation of ciliary length.</text>
</comment>
<comment type="subunit">
    <text evidence="2 4">Light intermediate chain of the cytoplasmic dynein complex 2, a multisubunit complex composed at least of eleven different proteins. The cytoplasmic dynein 2 complex consists of two catalytic heavy chains (HCs) and a number of non-catalytic subunits presented by intermediate chains (ICs), light intermediate chains (LICs) and light chains (LCs). Among them, a heavy chain (DYNC2H1), two intermediate chains (DYNC2I2 and DYNC2I1), a light intermediate chain (DYNC2LI1), and a light chain (DYNLT2B) are unique to the dynein-2 complex, but a subset of light chains are also shared by dynein-1 and dynein-2 complexes. Dynein-2 complex is built around two copies of cytoplasmic dynein 2 heavy chain 1 (DYNC2H1). The C-terminal region forms the motor domain, which converts the energy from ATP hydrolysis into movement. Its N-terminal region forms the tail, an extended structure that binds the other subunits and holds the two heavy chains in a homodimer (By similarity). Interacts with DYNC2H1 (via N-terminus); this interaction stabilizes the dynein-2 complex structure (PubMed:11907264).</text>
</comment>
<comment type="subcellular location">
    <subcellularLocation>
        <location evidence="2">Cytoplasm</location>
    </subcellularLocation>
    <subcellularLocation>
        <location evidence="2">Cell projection</location>
        <location evidence="2">Cilium</location>
    </subcellularLocation>
    <subcellularLocation>
        <location evidence="2">Cytoplasm</location>
        <location evidence="2">Cytoskeleton</location>
        <location evidence="2">Cilium basal body</location>
    </subcellularLocation>
    <subcellularLocation>
        <location evidence="5">Cytoplasm</location>
        <location evidence="5">Cytoskeleton</location>
        <location evidence="5">Cilium axoneme</location>
    </subcellularLocation>
    <subcellularLocation>
        <location evidence="2">Cytoplasm</location>
        <location evidence="2">Cytoskeleton</location>
        <location evidence="2">Microtubule organizing center</location>
        <location evidence="2">Centrosome</location>
    </subcellularLocation>
    <text evidence="1">Localizes to the apical cytoplasm.</text>
</comment>
<comment type="alternative products">
    <event type="alternative splicing"/>
    <isoform>
        <id>Q6AY43-1</id>
        <name>1</name>
        <sequence type="displayed"/>
    </isoform>
    <isoform>
        <id>Q6AY43-2</id>
        <name>2</name>
        <sequence type="described" ref="VSP_031293 VSP_031294"/>
    </isoform>
</comment>
<comment type="similarity">
    <text evidence="7">Belongs to the dynein light intermediate chain family.</text>
</comment>
<reference key="1">
    <citation type="journal article" date="2004" name="Nature">
        <title>Genome sequence of the Brown Norway rat yields insights into mammalian evolution.</title>
        <authorList>
            <person name="Gibbs R.A."/>
            <person name="Weinstock G.M."/>
            <person name="Metzker M.L."/>
            <person name="Muzny D.M."/>
            <person name="Sodergren E.J."/>
            <person name="Scherer S."/>
            <person name="Scott G."/>
            <person name="Steffen D."/>
            <person name="Worley K.C."/>
            <person name="Burch P.E."/>
            <person name="Okwuonu G."/>
            <person name="Hines S."/>
            <person name="Lewis L."/>
            <person name="Deramo C."/>
            <person name="Delgado O."/>
            <person name="Dugan-Rocha S."/>
            <person name="Miner G."/>
            <person name="Morgan M."/>
            <person name="Hawes A."/>
            <person name="Gill R."/>
            <person name="Holt R.A."/>
            <person name="Adams M.D."/>
            <person name="Amanatides P.G."/>
            <person name="Baden-Tillson H."/>
            <person name="Barnstead M."/>
            <person name="Chin S."/>
            <person name="Evans C.A."/>
            <person name="Ferriera S."/>
            <person name="Fosler C."/>
            <person name="Glodek A."/>
            <person name="Gu Z."/>
            <person name="Jennings D."/>
            <person name="Kraft C.L."/>
            <person name="Nguyen T."/>
            <person name="Pfannkoch C.M."/>
            <person name="Sitter C."/>
            <person name="Sutton G.G."/>
            <person name="Venter J.C."/>
            <person name="Woodage T."/>
            <person name="Smith D."/>
            <person name="Lee H.-M."/>
            <person name="Gustafson E."/>
            <person name="Cahill P."/>
            <person name="Kana A."/>
            <person name="Doucette-Stamm L."/>
            <person name="Weinstock K."/>
            <person name="Fechtel K."/>
            <person name="Weiss R.B."/>
            <person name="Dunn D.M."/>
            <person name="Green E.D."/>
            <person name="Blakesley R.W."/>
            <person name="Bouffard G.G."/>
            <person name="De Jong P.J."/>
            <person name="Osoegawa K."/>
            <person name="Zhu B."/>
            <person name="Marra M."/>
            <person name="Schein J."/>
            <person name="Bosdet I."/>
            <person name="Fjell C."/>
            <person name="Jones S."/>
            <person name="Krzywinski M."/>
            <person name="Mathewson C."/>
            <person name="Siddiqui A."/>
            <person name="Wye N."/>
            <person name="McPherson J."/>
            <person name="Zhao S."/>
            <person name="Fraser C.M."/>
            <person name="Shetty J."/>
            <person name="Shatsman S."/>
            <person name="Geer K."/>
            <person name="Chen Y."/>
            <person name="Abramzon S."/>
            <person name="Nierman W.C."/>
            <person name="Havlak P.H."/>
            <person name="Chen R."/>
            <person name="Durbin K.J."/>
            <person name="Egan A."/>
            <person name="Ren Y."/>
            <person name="Song X.-Z."/>
            <person name="Li B."/>
            <person name="Liu Y."/>
            <person name="Qin X."/>
            <person name="Cawley S."/>
            <person name="Cooney A.J."/>
            <person name="D'Souza L.M."/>
            <person name="Martin K."/>
            <person name="Wu J.Q."/>
            <person name="Gonzalez-Garay M.L."/>
            <person name="Jackson A.R."/>
            <person name="Kalafus K.J."/>
            <person name="McLeod M.P."/>
            <person name="Milosavljevic A."/>
            <person name="Virk D."/>
            <person name="Volkov A."/>
            <person name="Wheeler D.A."/>
            <person name="Zhang Z."/>
            <person name="Bailey J.A."/>
            <person name="Eichler E.E."/>
            <person name="Tuzun E."/>
            <person name="Birney E."/>
            <person name="Mongin E."/>
            <person name="Ureta-Vidal A."/>
            <person name="Woodwark C."/>
            <person name="Zdobnov E."/>
            <person name="Bork P."/>
            <person name="Suyama M."/>
            <person name="Torrents D."/>
            <person name="Alexandersson M."/>
            <person name="Trask B.J."/>
            <person name="Young J.M."/>
            <person name="Huang H."/>
            <person name="Wang H."/>
            <person name="Xing H."/>
            <person name="Daniels S."/>
            <person name="Gietzen D."/>
            <person name="Schmidt J."/>
            <person name="Stevens K."/>
            <person name="Vitt U."/>
            <person name="Wingrove J."/>
            <person name="Camara F."/>
            <person name="Mar Alba M."/>
            <person name="Abril J.F."/>
            <person name="Guigo R."/>
            <person name="Smit A."/>
            <person name="Dubchak I."/>
            <person name="Rubin E.M."/>
            <person name="Couronne O."/>
            <person name="Poliakov A."/>
            <person name="Huebner N."/>
            <person name="Ganten D."/>
            <person name="Goesele C."/>
            <person name="Hummel O."/>
            <person name="Kreitler T."/>
            <person name="Lee Y.-A."/>
            <person name="Monti J."/>
            <person name="Schulz H."/>
            <person name="Zimdahl H."/>
            <person name="Himmelbauer H."/>
            <person name="Lehrach H."/>
            <person name="Jacob H.J."/>
            <person name="Bromberg S."/>
            <person name="Gullings-Handley J."/>
            <person name="Jensen-Seaman M.I."/>
            <person name="Kwitek A.E."/>
            <person name="Lazar J."/>
            <person name="Pasko D."/>
            <person name="Tonellato P.J."/>
            <person name="Twigger S."/>
            <person name="Ponting C.P."/>
            <person name="Duarte J.M."/>
            <person name="Rice S."/>
            <person name="Goodstadt L."/>
            <person name="Beatson S.A."/>
            <person name="Emes R.D."/>
            <person name="Winter E.E."/>
            <person name="Webber C."/>
            <person name="Brandt P."/>
            <person name="Nyakatura G."/>
            <person name="Adetobi M."/>
            <person name="Chiaromonte F."/>
            <person name="Elnitski L."/>
            <person name="Eswara P."/>
            <person name="Hardison R.C."/>
            <person name="Hou M."/>
            <person name="Kolbe D."/>
            <person name="Makova K."/>
            <person name="Miller W."/>
            <person name="Nekrutenko A."/>
            <person name="Riemer C."/>
            <person name="Schwartz S."/>
            <person name="Taylor J."/>
            <person name="Yang S."/>
            <person name="Zhang Y."/>
            <person name="Lindpaintner K."/>
            <person name="Andrews T.D."/>
            <person name="Caccamo M."/>
            <person name="Clamp M."/>
            <person name="Clarke L."/>
            <person name="Curwen V."/>
            <person name="Durbin R.M."/>
            <person name="Eyras E."/>
            <person name="Searle S.M."/>
            <person name="Cooper G.M."/>
            <person name="Batzoglou S."/>
            <person name="Brudno M."/>
            <person name="Sidow A."/>
            <person name="Stone E.A."/>
            <person name="Payseur B.A."/>
            <person name="Bourque G."/>
            <person name="Lopez-Otin C."/>
            <person name="Puente X.S."/>
            <person name="Chakrabarti K."/>
            <person name="Chatterji S."/>
            <person name="Dewey C."/>
            <person name="Pachter L."/>
            <person name="Bray N."/>
            <person name="Yap V.B."/>
            <person name="Caspi A."/>
            <person name="Tesler G."/>
            <person name="Pevzner P.A."/>
            <person name="Haussler D."/>
            <person name="Roskin K.M."/>
            <person name="Baertsch R."/>
            <person name="Clawson H."/>
            <person name="Furey T.S."/>
            <person name="Hinrichs A.S."/>
            <person name="Karolchik D."/>
            <person name="Kent W.J."/>
            <person name="Rosenbloom K.R."/>
            <person name="Trumbower H."/>
            <person name="Weirauch M."/>
            <person name="Cooper D.N."/>
            <person name="Stenson P.D."/>
            <person name="Ma B."/>
            <person name="Brent M."/>
            <person name="Arumugam M."/>
            <person name="Shteynberg D."/>
            <person name="Copley R.R."/>
            <person name="Taylor M.S."/>
            <person name="Riethman H."/>
            <person name="Mudunuri U."/>
            <person name="Peterson J."/>
            <person name="Guyer M."/>
            <person name="Felsenfeld A."/>
            <person name="Old S."/>
            <person name="Mockrin S."/>
            <person name="Collins F.S."/>
        </authorList>
    </citation>
    <scope>NUCLEOTIDE SEQUENCE [LARGE SCALE GENOMIC DNA]</scope>
    <source>
        <strain>Brown Norway</strain>
    </source>
</reference>
<reference key="2">
    <citation type="journal article" date="2004" name="Genome Res.">
        <title>The status, quality, and expansion of the NIH full-length cDNA project: the Mammalian Gene Collection (MGC).</title>
        <authorList>
            <consortium name="The MGC Project Team"/>
        </authorList>
    </citation>
    <scope>NUCLEOTIDE SEQUENCE [LARGE SCALE MRNA] (ISOFORM 2)</scope>
    <source>
        <tissue>Testis</tissue>
    </source>
</reference>
<reference key="3">
    <citation type="journal article" date="2002" name="J. Cell Sci.">
        <title>Molecular structure of cytoplasmic dynein 2 and its distribution in neuronal and ciliated cells.</title>
        <authorList>
            <person name="Mikami A."/>
            <person name="Tynan S.H."/>
            <person name="Hama T."/>
            <person name="Luby-Phelps K."/>
            <person name="Saito T."/>
            <person name="Crandall J.E."/>
            <person name="Besharse J.C."/>
            <person name="Vallee R.B."/>
        </authorList>
    </citation>
    <scope>INTERACTION WITH DYNC2H1</scope>
    <scope>SUBCELLULAR LOCATION</scope>
</reference>
<reference key="4">
    <citation type="journal article" date="2002" name="Mol. Biol. Cell">
        <title>Identification of a novel light intermediate chain (D2LIC) for mammalian cytoplasmic dynein 2.</title>
        <authorList>
            <person name="Grissom P.M."/>
            <person name="Vaisberg E.A."/>
            <person name="McIntosh J.R."/>
        </authorList>
    </citation>
    <scope>INTERACTION WITH DYNC2H1</scope>
</reference>
<name>DC2L1_RAT</name>
<evidence type="ECO:0000250" key="1">
    <source>
        <dbReference type="UniProtKB" id="Q8K0T2"/>
    </source>
</evidence>
<evidence type="ECO:0000250" key="2">
    <source>
        <dbReference type="UniProtKB" id="Q8TCX1"/>
    </source>
</evidence>
<evidence type="ECO:0000256" key="3">
    <source>
        <dbReference type="SAM" id="MobiDB-lite"/>
    </source>
</evidence>
<evidence type="ECO:0000269" key="4">
    <source>
    </source>
</evidence>
<evidence type="ECO:0000269" key="5">
    <source>
    </source>
</evidence>
<evidence type="ECO:0000303" key="6">
    <source>
    </source>
</evidence>
<evidence type="ECO:0000305" key="7"/>
<keyword id="KW-0025">Alternative splicing</keyword>
<keyword id="KW-0966">Cell projection</keyword>
<keyword id="KW-0969">Cilium</keyword>
<keyword id="KW-0970">Cilium biogenesis/degradation</keyword>
<keyword id="KW-0963">Cytoplasm</keyword>
<keyword id="KW-0206">Cytoskeleton</keyword>
<keyword id="KW-0217">Developmental protein</keyword>
<keyword id="KW-0243">Dynein</keyword>
<keyword id="KW-0493">Microtubule</keyword>
<keyword id="KW-0505">Motor protein</keyword>
<keyword id="KW-1185">Reference proteome</keyword>
<gene>
    <name type="primary">Dync2li1</name>
    <name type="synonym">Lic3</name>
</gene>
<sequence length="351" mass="39670">MPSETLWEIAKAEVEKRRCHGSDGDGMEIGEKSVFFIGSKNGGKTTIILRCLDRDEPAKPTLALEYTYGRKTKGHNTPKDIAHFWELGGGTSLLDLISIPITVDTLRTFSIVLVLDLSKPNDLWPTMENLLQATKSHVDKVTMKLGKANSKASSEMRQRMWSVMQKDHPDRELIDPFPIPLVIIGSKYDIFQDFDPEKRKVICKTLRFVAHYYGASLMFTSKSEALLLKMRGVINQLAFGIDKSKSMCVDQNKPLFITAGLDSLCQIGSPPVPDSDIGKLQAHSPMELWKKVYEKLFPPKSTSTLKAIQDPARDPQYAESEVDEMRVQKDQELEQYKRSSSKTWKQIELDS</sequence>